<proteinExistence type="evidence at transcript level"/>
<protein>
    <recommendedName>
        <fullName evidence="4">Neuroglobin</fullName>
    </recommendedName>
    <alternativeName>
        <fullName evidence="2">Nitrite reductase</fullName>
        <ecNumber evidence="2">1.7.-.-</ecNumber>
    </alternativeName>
</protein>
<evidence type="ECO:0000250" key="1">
    <source>
        <dbReference type="UniProtKB" id="Q9ER97"/>
    </source>
</evidence>
<evidence type="ECO:0000250" key="2">
    <source>
        <dbReference type="UniProtKB" id="Q9NPG2"/>
    </source>
</evidence>
<evidence type="ECO:0000255" key="3">
    <source>
        <dbReference type="PROSITE-ProRule" id="PRU00238"/>
    </source>
</evidence>
<evidence type="ECO:0000303" key="4">
    <source>
    </source>
</evidence>
<feature type="chain" id="PRO_0000240277" description="Neuroglobin">
    <location>
        <begin position="1"/>
        <end position="151"/>
    </location>
</feature>
<feature type="domain" description="Globin" evidence="3">
    <location>
        <begin position="1"/>
        <end position="149"/>
    </location>
</feature>
<feature type="binding site" description="distal binding residue; reversible" evidence="2 3">
    <location>
        <position position="64"/>
    </location>
    <ligand>
        <name>heme b</name>
        <dbReference type="ChEBI" id="CHEBI:60344"/>
    </ligand>
    <ligandPart>
        <name>Fe</name>
        <dbReference type="ChEBI" id="CHEBI:18248"/>
    </ligandPart>
</feature>
<feature type="binding site" description="proximal binding residue" evidence="2 3">
    <location>
        <position position="96"/>
    </location>
    <ligand>
        <name>heme b</name>
        <dbReference type="ChEBI" id="CHEBI:60344"/>
    </ligand>
    <ligandPart>
        <name>Fe</name>
        <dbReference type="ChEBI" id="CHEBI:18248"/>
    </ligandPart>
</feature>
<gene>
    <name evidence="2" type="primary">NGB</name>
</gene>
<comment type="function">
    <text evidence="2">Monomeric globin with a bis-histidyl six-coordinate heme-iron atom through which it can bind dioxygen, carbon monoxide and nitric oxide. Could help transport oxygen and increase its availability to the metabolically active neuronal tissues, though its low quantity in tissues as well as its high affinity for dioxygen, which may limit its oxygen-releasing ability, argue against it. The ferrous/deoxygenated form exhibits a nitrite reductase activity and it could produce nitric oxide which in turn inhibits cellular respiration in response to hypoxia. In its ferrous/deoxygenated state, it may also exhibit GDI (Guanine nucleotide Dissociation Inhibitor) activity toward heterotrimeric G-alpha proteins, thereby regulating signal transduction to facilitate neuroprotective responses in the wake of hypoxia and associated oxidative stress.</text>
</comment>
<comment type="catalytic activity">
    <reaction evidence="2">
        <text>Fe(III)-heme b-[protein] + nitric oxide + H2O = Fe(II)-heme b-[protein] + nitrite + 2 H(+)</text>
        <dbReference type="Rhea" id="RHEA:77711"/>
        <dbReference type="Rhea" id="RHEA-COMP:18975"/>
        <dbReference type="Rhea" id="RHEA-COMP:18976"/>
        <dbReference type="ChEBI" id="CHEBI:15377"/>
        <dbReference type="ChEBI" id="CHEBI:15378"/>
        <dbReference type="ChEBI" id="CHEBI:16301"/>
        <dbReference type="ChEBI" id="CHEBI:16480"/>
        <dbReference type="ChEBI" id="CHEBI:55376"/>
        <dbReference type="ChEBI" id="CHEBI:60344"/>
    </reaction>
    <physiologicalReaction direction="right-to-left" evidence="2">
        <dbReference type="Rhea" id="RHEA:77713"/>
    </physiologicalReaction>
</comment>
<comment type="subunit">
    <text evidence="1 2">Monomer (By similarity). Homodimer and homotetramer; disulfide-linked. Mainly monomeric but also detected as part of homodimers and homotetramers (By similarity). Interacts with 14-3-3 proteins; regulates the phosphorylation of NGB. Could interact (ferrous form) with G-alpha(i) proteins (GTP-bound form) (By similarity).</text>
</comment>
<comment type="subcellular location">
    <subcellularLocation>
        <location evidence="1">Cytoplasm</location>
        <location evidence="1">Cytosol</location>
    </subcellularLocation>
    <subcellularLocation>
        <location evidence="1">Mitochondrion matrix</location>
    </subcellularLocation>
    <text evidence="1">Enriched in mitochondrial matrix upon oxygen-glucose deprivation.</text>
</comment>
<comment type="PTM">
    <text evidence="2">Phosphorylated during hypoxia by ERK1/ERK2. Phosphorylation regulates the heme pocket hexacoordination preventing the association of His-64 with the heme metal center. Thereby, promotes the access of dioxygen and nitrite to the heme and stimulates the nitrite reductase activity. Phosphorylation during hypoxia is stabilized by 14-3-3 proteins.</text>
</comment>
<comment type="similarity">
    <text evidence="3">Belongs to the globin family.</text>
</comment>
<name>NGB_RABIT</name>
<reference key="1">
    <citation type="journal article" date="2005" name="J. Biol. Chem.">
        <title>Divergent distribution in vascular and avascular mammalian retinae links neuroglobin to cellular respiration.</title>
        <authorList>
            <person name="Bentmann A."/>
            <person name="Schmidt M."/>
            <person name="Reuss S."/>
            <person name="Wolfrum U."/>
            <person name="Hankeln T."/>
            <person name="Burmester T."/>
        </authorList>
    </citation>
    <scope>NUCLEOTIDE SEQUENCE [MRNA]</scope>
    <source>
        <tissue>Brain</tissue>
    </source>
</reference>
<sequence length="151" mass="17040">MERPEQELIRQSWRAVSRSPLEHGTVLFARLFDLEPDLLPLFQYNCRQFSSPEDCLSSPEFLDHIRKVMLVIDAAVTNVEDLSSLEEYLAGLGRKHRAVGVRFSSFSTVGESLLYMLEKCLGPAFTPATRAAWSQLYGAVVQAMSRGWDGE</sequence>
<dbReference type="EC" id="1.7.-.-" evidence="2"/>
<dbReference type="EMBL" id="AJ781214">
    <property type="protein sequence ID" value="CAH03123.1"/>
    <property type="molecule type" value="mRNA"/>
</dbReference>
<dbReference type="RefSeq" id="NP_001075602.1">
    <property type="nucleotide sequence ID" value="NM_001082133.2"/>
</dbReference>
<dbReference type="SMR" id="Q6EV97"/>
<dbReference type="FunCoup" id="Q6EV97">
    <property type="interactions" value="7"/>
</dbReference>
<dbReference type="STRING" id="9986.ENSOCUP00000037874"/>
<dbReference type="PaxDb" id="9986-ENSOCUP00000004997"/>
<dbReference type="GeneID" id="100008868"/>
<dbReference type="KEGG" id="ocu:100008868"/>
<dbReference type="CTD" id="58157"/>
<dbReference type="eggNOG" id="KOG3378">
    <property type="taxonomic scope" value="Eukaryota"/>
</dbReference>
<dbReference type="InParanoid" id="Q6EV97"/>
<dbReference type="OrthoDB" id="436496at2759"/>
<dbReference type="Proteomes" id="UP000001811">
    <property type="component" value="Unplaced"/>
</dbReference>
<dbReference type="GO" id="GO:0005829">
    <property type="term" value="C:cytosol"/>
    <property type="evidence" value="ECO:0007669"/>
    <property type="project" value="UniProtKB-SubCell"/>
</dbReference>
<dbReference type="GO" id="GO:0005759">
    <property type="term" value="C:mitochondrial matrix"/>
    <property type="evidence" value="ECO:0007669"/>
    <property type="project" value="UniProtKB-SubCell"/>
</dbReference>
<dbReference type="GO" id="GO:0005092">
    <property type="term" value="F:GDP-dissociation inhibitor activity"/>
    <property type="evidence" value="ECO:0000250"/>
    <property type="project" value="UniProtKB"/>
</dbReference>
<dbReference type="GO" id="GO:0020037">
    <property type="term" value="F:heme binding"/>
    <property type="evidence" value="ECO:0007669"/>
    <property type="project" value="InterPro"/>
</dbReference>
<dbReference type="GO" id="GO:0046872">
    <property type="term" value="F:metal ion binding"/>
    <property type="evidence" value="ECO:0007669"/>
    <property type="project" value="UniProtKB-KW"/>
</dbReference>
<dbReference type="GO" id="GO:0098809">
    <property type="term" value="F:nitrite reductase activity"/>
    <property type="evidence" value="ECO:0000250"/>
    <property type="project" value="UniProtKB"/>
</dbReference>
<dbReference type="GO" id="GO:0019825">
    <property type="term" value="F:oxygen binding"/>
    <property type="evidence" value="ECO:0000250"/>
    <property type="project" value="UniProtKB"/>
</dbReference>
<dbReference type="GO" id="GO:0071456">
    <property type="term" value="P:cellular response to hypoxia"/>
    <property type="evidence" value="ECO:0000250"/>
    <property type="project" value="UniProtKB"/>
</dbReference>
<dbReference type="CDD" id="cd08920">
    <property type="entry name" value="Ngb"/>
    <property type="match status" value="1"/>
</dbReference>
<dbReference type="FunFam" id="1.10.490.10:FF:000006">
    <property type="entry name" value="Neuroglobin"/>
    <property type="match status" value="1"/>
</dbReference>
<dbReference type="Gene3D" id="1.10.490.10">
    <property type="entry name" value="Globins"/>
    <property type="match status" value="1"/>
</dbReference>
<dbReference type="InterPro" id="IPR000971">
    <property type="entry name" value="Globin"/>
</dbReference>
<dbReference type="InterPro" id="IPR050532">
    <property type="entry name" value="Globin-like_OT"/>
</dbReference>
<dbReference type="InterPro" id="IPR009050">
    <property type="entry name" value="Globin-like_sf"/>
</dbReference>
<dbReference type="InterPro" id="IPR012292">
    <property type="entry name" value="Globin/Proto"/>
</dbReference>
<dbReference type="PANTHER" id="PTHR46458">
    <property type="entry name" value="BLR2807 PROTEIN"/>
    <property type="match status" value="1"/>
</dbReference>
<dbReference type="PANTHER" id="PTHR46458:SF19">
    <property type="entry name" value="NEUROGLOBIN"/>
    <property type="match status" value="1"/>
</dbReference>
<dbReference type="Pfam" id="PF00042">
    <property type="entry name" value="Globin"/>
    <property type="match status" value="1"/>
</dbReference>
<dbReference type="SUPFAM" id="SSF46458">
    <property type="entry name" value="Globin-like"/>
    <property type="match status" value="1"/>
</dbReference>
<dbReference type="PROSITE" id="PS01033">
    <property type="entry name" value="GLOBIN"/>
    <property type="match status" value="1"/>
</dbReference>
<keyword id="KW-0963">Cytoplasm</keyword>
<keyword id="KW-1015">Disulfide bond</keyword>
<keyword id="KW-0349">Heme</keyword>
<keyword id="KW-0408">Iron</keyword>
<keyword id="KW-0479">Metal-binding</keyword>
<keyword id="KW-0496">Mitochondrion</keyword>
<keyword id="KW-0560">Oxidoreductase</keyword>
<keyword id="KW-1185">Reference proteome</keyword>
<organism>
    <name type="scientific">Oryctolagus cuniculus</name>
    <name type="common">Rabbit</name>
    <dbReference type="NCBI Taxonomy" id="9986"/>
    <lineage>
        <taxon>Eukaryota</taxon>
        <taxon>Metazoa</taxon>
        <taxon>Chordata</taxon>
        <taxon>Craniata</taxon>
        <taxon>Vertebrata</taxon>
        <taxon>Euteleostomi</taxon>
        <taxon>Mammalia</taxon>
        <taxon>Eutheria</taxon>
        <taxon>Euarchontoglires</taxon>
        <taxon>Glires</taxon>
        <taxon>Lagomorpha</taxon>
        <taxon>Leporidae</taxon>
        <taxon>Oryctolagus</taxon>
    </lineage>
</organism>
<accession>Q6EV97</accession>